<name>DEFEU_ASPAM</name>
<comment type="function">
    <text evidence="2">Antimicrobial peptide that acts against Gram-positive bacteria but not against Gram-negative bacteria (PubMed:23093408). It selectively inhibits peptidoglycan biosynthesis through complex formation with the cell wall precursor lipid II (1:1 molar ratio) thus inhibiting cell wall synthesis (PubMed:23093408). It does not disrupt cell membranes (PubMed:23093408). In vivo, is effective against an intraperitoneal infection with S.pneumoniae (PubMed:23093408). In vitro, it shows very low hemolytic and cytolytic activities (PubMed:23093408).</text>
</comment>
<comment type="biophysicochemical properties">
    <temperatureDependence>
        <text evidence="2">Has the lowest denaturation temperature of 56.5 degrees Celsius at pH 7. Binding to DPC micelles does not affect the thermal stability in alpkaline pH. Has the lowest denaturation temperature of 71.7 degrees Celsius at pH 2. Binding to DPC micelles strongly increases the thermal stability in acidic pH.</text>
    </temperatureDependence>
</comment>
<comment type="subcellular location">
    <subcellularLocation>
        <location evidence="4">Secreted</location>
    </subcellularLocation>
    <subcellularLocation>
        <location evidence="2">Target cell membrane</location>
    </subcellularLocation>
</comment>
<comment type="miscellaneous">
    <text evidence="2">The Cys-4-Pro-5 bond is in cis conformation, whereas Gly-29-Pro-30 and His-35-Pro-36 bonds are in trans conformations.</text>
</comment>
<comment type="similarity">
    <text evidence="4">Belongs to the invertebrate defensin family.</text>
</comment>
<comment type="online information" name="The antimicrobial peptide database">
    <link uri="https://wangapd3.com/database/query_output.php?ID=02119"/>
</comment>
<reference evidence="6" key="1">
    <citation type="journal article" date="2012" name="J. Biol. Chem.">
        <title>Eurocin, a new fungal defensin: structure, lipid binding, and its mode of action.</title>
        <authorList>
            <person name="Oeemig J.S."/>
            <person name="Lynggaard C."/>
            <person name="Knudsen D.H."/>
            <person name="Hansen F.T."/>
            <person name="Norgaard K.D."/>
            <person name="Schneider T."/>
            <person name="Vad B.S."/>
            <person name="Sandvang D.H."/>
            <person name="Nielsen L.A."/>
            <person name="Neve S."/>
            <person name="Kristensen H.H."/>
            <person name="Sahl H.G."/>
            <person name="Otzen D.E."/>
            <person name="Wimmer R."/>
        </authorList>
    </citation>
    <scope>NUCLEOTIDE SEQUENCE [MRNA]</scope>
    <scope>STRUCTURE BY NMR</scope>
    <scope>BIOPHYSICOCHEMICAL PROPERTIES</scope>
    <scope>DISULFIDE BOND</scope>
    <scope>SUBCELLULAR LOCATION</scope>
</reference>
<accession>K7N5L0</accession>
<organism>
    <name type="scientific">Aspergillus amstelodami</name>
    <dbReference type="NCBI Taxonomy" id="5054"/>
    <lineage>
        <taxon>Eukaryota</taxon>
        <taxon>Fungi</taxon>
        <taxon>Dikarya</taxon>
        <taxon>Ascomycota</taxon>
        <taxon>Pezizomycotina</taxon>
        <taxon>Eurotiomycetes</taxon>
        <taxon>Eurotiomycetidae</taxon>
        <taxon>Eurotiales</taxon>
        <taxon>Aspergillaceae</taxon>
        <taxon>Aspergillus</taxon>
        <taxon>Aspergillus subgen. Aspergillus</taxon>
    </lineage>
</organism>
<dbReference type="PDB" id="2LT8">
    <property type="method" value="NMR"/>
    <property type="chains" value="A=1-42"/>
</dbReference>
<dbReference type="PDBsum" id="2LT8"/>
<dbReference type="SMR" id="K7N5L0"/>
<dbReference type="EvolutionaryTrace" id="K7N5L0"/>
<dbReference type="GO" id="GO:0005576">
    <property type="term" value="C:extracellular region"/>
    <property type="evidence" value="ECO:0007669"/>
    <property type="project" value="UniProtKB-SubCell"/>
</dbReference>
<dbReference type="GO" id="GO:0020002">
    <property type="term" value="C:host cell plasma membrane"/>
    <property type="evidence" value="ECO:0000314"/>
    <property type="project" value="UniProtKB"/>
</dbReference>
<dbReference type="GO" id="GO:0016020">
    <property type="term" value="C:membrane"/>
    <property type="evidence" value="ECO:0007669"/>
    <property type="project" value="UniProtKB-KW"/>
</dbReference>
<dbReference type="GO" id="GO:0044218">
    <property type="term" value="C:other organism cell membrane"/>
    <property type="evidence" value="ECO:0007669"/>
    <property type="project" value="UniProtKB-KW"/>
</dbReference>
<dbReference type="GO" id="GO:0032994">
    <property type="term" value="C:protein-lipid complex"/>
    <property type="evidence" value="ECO:0000314"/>
    <property type="project" value="UniProtKB"/>
</dbReference>
<dbReference type="GO" id="GO:0008289">
    <property type="term" value="F:lipid binding"/>
    <property type="evidence" value="ECO:0000314"/>
    <property type="project" value="UniProtKB"/>
</dbReference>
<dbReference type="GO" id="GO:0050830">
    <property type="term" value="P:defense response to Gram-positive bacterium"/>
    <property type="evidence" value="ECO:0000314"/>
    <property type="project" value="UniProtKB"/>
</dbReference>
<dbReference type="GO" id="GO:0002376">
    <property type="term" value="P:immune system process"/>
    <property type="evidence" value="ECO:0007669"/>
    <property type="project" value="UniProtKB-KW"/>
</dbReference>
<dbReference type="Gene3D" id="3.30.30.10">
    <property type="entry name" value="Knottin, scorpion toxin-like"/>
    <property type="match status" value="1"/>
</dbReference>
<dbReference type="InterPro" id="IPR001542">
    <property type="entry name" value="Defensin_invertebrate/fungal"/>
</dbReference>
<dbReference type="InterPro" id="IPR036574">
    <property type="entry name" value="Scorpion_toxin-like_sf"/>
</dbReference>
<dbReference type="Pfam" id="PF01097">
    <property type="entry name" value="Defensin_2"/>
    <property type="match status" value="1"/>
</dbReference>
<dbReference type="SUPFAM" id="SSF57095">
    <property type="entry name" value="Scorpion toxin-like"/>
    <property type="match status" value="1"/>
</dbReference>
<sequence length="42" mass="4345">GFGCPGDAYQCSEHCRALGGGRTGGYCAGPWYLGHPTCTCSF</sequence>
<feature type="chain" id="PRO_0000449380" description="Fungal defensin eurocin">
    <location>
        <begin position="1"/>
        <end position="42"/>
    </location>
</feature>
<feature type="region of interest" description="Interaction site with membranes lipids" evidence="5">
    <location>
        <begin position="31"/>
        <end position="35"/>
    </location>
</feature>
<feature type="binding site" evidence="1">
    <location>
        <position position="2"/>
    </location>
    <ligand>
        <name>beta-D-GlcNAc-(1-&gt;4)-Mur2Ac(oyl-L-Ala-gamma-D-Glu-L-Lys-D-Ala-D-Ala)-di-trans,octa-cis-undecaprenyl diphosphate</name>
        <dbReference type="ChEBI" id="CHEBI:60033"/>
    </ligand>
</feature>
<feature type="binding site" evidence="1">
    <location>
        <position position="3"/>
    </location>
    <ligand>
        <name>beta-D-GlcNAc-(1-&gt;4)-Mur2Ac(oyl-L-Ala-gamma-D-Glu-L-Lys-D-Ala-D-Ala)-di-trans,octa-cis-undecaprenyl diphosphate</name>
        <dbReference type="ChEBI" id="CHEBI:60033"/>
    </ligand>
</feature>
<feature type="binding site" evidence="1">
    <location>
        <position position="4"/>
    </location>
    <ligand>
        <name>beta-D-GlcNAc-(1-&gt;4)-Mur2Ac(oyl-L-Ala-gamma-D-Glu-L-Lys-D-Ala-D-Ala)-di-trans,octa-cis-undecaprenyl diphosphate</name>
        <dbReference type="ChEBI" id="CHEBI:60033"/>
    </ligand>
</feature>
<feature type="binding site" evidence="1">
    <location>
        <position position="14"/>
    </location>
    <ligand>
        <name>beta-D-GlcNAc-(1-&gt;4)-Mur2Ac(oyl-L-Ala-gamma-D-Glu-L-Lys-D-Ala-D-Ala)-di-trans,octa-cis-undecaprenyl diphosphate</name>
        <dbReference type="ChEBI" id="CHEBI:60033"/>
    </ligand>
</feature>
<feature type="binding site" evidence="1">
    <location>
        <position position="38"/>
    </location>
    <ligand>
        <name>beta-D-GlcNAc-(1-&gt;4)-Mur2Ac(oyl-L-Ala-gamma-D-Glu-L-Lys-D-Ala-D-Ala)-di-trans,octa-cis-undecaprenyl diphosphate</name>
        <dbReference type="ChEBI" id="CHEBI:60033"/>
    </ligand>
</feature>
<feature type="site" description="Interaction site with membranes lipids" evidence="5">
    <location>
        <position position="6"/>
    </location>
</feature>
<feature type="disulfide bond" evidence="2 7">
    <location>
        <begin position="4"/>
        <end position="27"/>
    </location>
</feature>
<feature type="disulfide bond" evidence="2 7">
    <location>
        <begin position="11"/>
        <end position="38"/>
    </location>
</feature>
<feature type="disulfide bond" evidence="2 7">
    <location>
        <begin position="15"/>
        <end position="40"/>
    </location>
</feature>
<feature type="turn" evidence="8">
    <location>
        <begin position="2"/>
        <end position="6"/>
    </location>
</feature>
<feature type="helix" evidence="8">
    <location>
        <begin position="8"/>
        <end position="18"/>
    </location>
</feature>
<feature type="strand" evidence="8">
    <location>
        <begin position="24"/>
        <end position="28"/>
    </location>
</feature>
<feature type="strand" evidence="8">
    <location>
        <begin position="31"/>
        <end position="35"/>
    </location>
</feature>
<feature type="strand" evidence="8">
    <location>
        <begin position="37"/>
        <end position="41"/>
    </location>
</feature>
<protein>
    <recommendedName>
        <fullName evidence="3">Fungal defensin eurocin</fullName>
    </recommendedName>
</protein>
<evidence type="ECO:0000250" key="1">
    <source>
        <dbReference type="UniProtKB" id="Q53I06"/>
    </source>
</evidence>
<evidence type="ECO:0000269" key="2">
    <source>
    </source>
</evidence>
<evidence type="ECO:0000303" key="3">
    <source>
    </source>
</evidence>
<evidence type="ECO:0000305" key="4"/>
<evidence type="ECO:0000305" key="5">
    <source>
    </source>
</evidence>
<evidence type="ECO:0000312" key="6">
    <source>
        <dbReference type="PDB" id="2LT8"/>
    </source>
</evidence>
<evidence type="ECO:0007744" key="7">
    <source>
        <dbReference type="PDB" id="2LT8"/>
    </source>
</evidence>
<evidence type="ECO:0007829" key="8">
    <source>
        <dbReference type="PDB" id="2LT8"/>
    </source>
</evidence>
<proteinExistence type="evidence at protein level"/>
<keyword id="KW-0002">3D-structure</keyword>
<keyword id="KW-0044">Antibiotic</keyword>
<keyword id="KW-0929">Antimicrobial</keyword>
<keyword id="KW-0211">Defensin</keyword>
<keyword id="KW-1015">Disulfide bond</keyword>
<keyword id="KW-0391">Immunity</keyword>
<keyword id="KW-0399">Innate immunity</keyword>
<keyword id="KW-0446">Lipid-binding</keyword>
<keyword id="KW-0472">Membrane</keyword>
<keyword id="KW-0964">Secreted</keyword>
<keyword id="KW-1052">Target cell membrane</keyword>
<keyword id="KW-1053">Target membrane</keyword>